<feature type="chain" id="PRO_1000133662" description="Beta-hexosaminidase">
    <location>
        <begin position="1"/>
        <end position="341"/>
    </location>
</feature>
<feature type="active site" description="Proton donor/acceptor" evidence="1">
    <location>
        <position position="176"/>
    </location>
</feature>
<feature type="active site" description="Nucleophile" evidence="1">
    <location>
        <position position="248"/>
    </location>
</feature>
<feature type="binding site" evidence="1">
    <location>
        <position position="62"/>
    </location>
    <ligand>
        <name>substrate</name>
    </ligand>
</feature>
<feature type="binding site" evidence="1">
    <location>
        <position position="70"/>
    </location>
    <ligand>
        <name>substrate</name>
    </ligand>
</feature>
<feature type="binding site" evidence="1">
    <location>
        <position position="133"/>
    </location>
    <ligand>
        <name>substrate</name>
    </ligand>
</feature>
<feature type="binding site" evidence="1">
    <location>
        <begin position="163"/>
        <end position="164"/>
    </location>
    <ligand>
        <name>substrate</name>
    </ligand>
</feature>
<feature type="site" description="Important for catalytic activity" evidence="1">
    <location>
        <position position="174"/>
    </location>
</feature>
<keyword id="KW-0131">Cell cycle</keyword>
<keyword id="KW-0132">Cell division</keyword>
<keyword id="KW-0133">Cell shape</keyword>
<keyword id="KW-0961">Cell wall biogenesis/degradation</keyword>
<keyword id="KW-0963">Cytoplasm</keyword>
<keyword id="KW-0326">Glycosidase</keyword>
<keyword id="KW-0378">Hydrolase</keyword>
<keyword id="KW-0573">Peptidoglycan synthesis</keyword>
<keyword id="KW-1185">Reference proteome</keyword>
<proteinExistence type="inferred from homology"/>
<name>NAGZ_ECO27</name>
<dbReference type="EC" id="3.2.1.52" evidence="1"/>
<dbReference type="EMBL" id="FM180568">
    <property type="protein sequence ID" value="CAS08747.1"/>
    <property type="molecule type" value="Genomic_DNA"/>
</dbReference>
<dbReference type="RefSeq" id="WP_000529298.1">
    <property type="nucleotide sequence ID" value="NC_011601.1"/>
</dbReference>
<dbReference type="SMR" id="B7UPC3"/>
<dbReference type="CAZy" id="GH3">
    <property type="family name" value="Glycoside Hydrolase Family 3"/>
</dbReference>
<dbReference type="KEGG" id="ecg:E2348C_1199"/>
<dbReference type="HOGENOM" id="CLU_008392_0_0_6"/>
<dbReference type="UniPathway" id="UPA00544"/>
<dbReference type="Proteomes" id="UP000008205">
    <property type="component" value="Chromosome"/>
</dbReference>
<dbReference type="GO" id="GO:0005737">
    <property type="term" value="C:cytoplasm"/>
    <property type="evidence" value="ECO:0007669"/>
    <property type="project" value="UniProtKB-SubCell"/>
</dbReference>
<dbReference type="GO" id="GO:0004563">
    <property type="term" value="F:beta-N-acetylhexosaminidase activity"/>
    <property type="evidence" value="ECO:0007669"/>
    <property type="project" value="UniProtKB-UniRule"/>
</dbReference>
<dbReference type="GO" id="GO:0005975">
    <property type="term" value="P:carbohydrate metabolic process"/>
    <property type="evidence" value="ECO:0007669"/>
    <property type="project" value="InterPro"/>
</dbReference>
<dbReference type="GO" id="GO:0051301">
    <property type="term" value="P:cell division"/>
    <property type="evidence" value="ECO:0007669"/>
    <property type="project" value="UniProtKB-KW"/>
</dbReference>
<dbReference type="GO" id="GO:0071555">
    <property type="term" value="P:cell wall organization"/>
    <property type="evidence" value="ECO:0007669"/>
    <property type="project" value="UniProtKB-KW"/>
</dbReference>
<dbReference type="GO" id="GO:0009252">
    <property type="term" value="P:peptidoglycan biosynthetic process"/>
    <property type="evidence" value="ECO:0007669"/>
    <property type="project" value="UniProtKB-KW"/>
</dbReference>
<dbReference type="GO" id="GO:0009254">
    <property type="term" value="P:peptidoglycan turnover"/>
    <property type="evidence" value="ECO:0007669"/>
    <property type="project" value="UniProtKB-UniRule"/>
</dbReference>
<dbReference type="GO" id="GO:0008360">
    <property type="term" value="P:regulation of cell shape"/>
    <property type="evidence" value="ECO:0007669"/>
    <property type="project" value="UniProtKB-KW"/>
</dbReference>
<dbReference type="FunFam" id="3.20.20.300:FF:000001">
    <property type="entry name" value="Beta-hexosaminidase"/>
    <property type="match status" value="1"/>
</dbReference>
<dbReference type="Gene3D" id="3.20.20.300">
    <property type="entry name" value="Glycoside hydrolase, family 3, N-terminal domain"/>
    <property type="match status" value="1"/>
</dbReference>
<dbReference type="HAMAP" id="MF_00364">
    <property type="entry name" value="NagZ"/>
    <property type="match status" value="1"/>
</dbReference>
<dbReference type="InterPro" id="IPR022956">
    <property type="entry name" value="Beta_hexosaminidase_bac"/>
</dbReference>
<dbReference type="InterPro" id="IPR019800">
    <property type="entry name" value="Glyco_hydro_3_AS"/>
</dbReference>
<dbReference type="InterPro" id="IPR001764">
    <property type="entry name" value="Glyco_hydro_3_N"/>
</dbReference>
<dbReference type="InterPro" id="IPR036962">
    <property type="entry name" value="Glyco_hydro_3_N_sf"/>
</dbReference>
<dbReference type="InterPro" id="IPR017853">
    <property type="entry name" value="Glycoside_hydrolase_SF"/>
</dbReference>
<dbReference type="InterPro" id="IPR050226">
    <property type="entry name" value="NagZ_Beta-hexosaminidase"/>
</dbReference>
<dbReference type="NCBIfam" id="NF003740">
    <property type="entry name" value="PRK05337.1"/>
    <property type="match status" value="1"/>
</dbReference>
<dbReference type="PANTHER" id="PTHR30480:SF13">
    <property type="entry name" value="BETA-HEXOSAMINIDASE"/>
    <property type="match status" value="1"/>
</dbReference>
<dbReference type="PANTHER" id="PTHR30480">
    <property type="entry name" value="BETA-HEXOSAMINIDASE-RELATED"/>
    <property type="match status" value="1"/>
</dbReference>
<dbReference type="Pfam" id="PF00933">
    <property type="entry name" value="Glyco_hydro_3"/>
    <property type="match status" value="1"/>
</dbReference>
<dbReference type="SUPFAM" id="SSF51445">
    <property type="entry name" value="(Trans)glycosidases"/>
    <property type="match status" value="1"/>
</dbReference>
<dbReference type="PROSITE" id="PS00775">
    <property type="entry name" value="GLYCOSYL_HYDROL_F3"/>
    <property type="match status" value="1"/>
</dbReference>
<gene>
    <name evidence="1" type="primary">nagZ</name>
    <name type="ordered locus">E2348C_1199</name>
</gene>
<comment type="function">
    <text evidence="1">Plays a role in peptidoglycan recycling by cleaving the terminal beta-1,4-linked N-acetylglucosamine (GlcNAc) from peptide-linked peptidoglycan fragments, giving rise to free GlcNAc, anhydro-N-acetylmuramic acid and anhydro-N-acetylmuramic acid-linked peptides.</text>
</comment>
<comment type="catalytic activity">
    <reaction evidence="1">
        <text>Hydrolysis of terminal non-reducing N-acetyl-D-hexosamine residues in N-acetyl-beta-D-hexosaminides.</text>
        <dbReference type="EC" id="3.2.1.52"/>
    </reaction>
</comment>
<comment type="pathway">
    <text evidence="1">Cell wall biogenesis; peptidoglycan recycling.</text>
</comment>
<comment type="subcellular location">
    <subcellularLocation>
        <location evidence="1">Cytoplasm</location>
    </subcellularLocation>
</comment>
<comment type="similarity">
    <text evidence="1">Belongs to the glycosyl hydrolase 3 family. NagZ subfamily.</text>
</comment>
<accession>B7UPC3</accession>
<sequence>MGPVMLDVEGYELDAEEREILAHPLVGGLILFTRNYHDPAQLRELVRQIRAASRNHLVVAVDQEGGRVQRFREGFTRLPAAQSFAALLGMEEGGKLAQEAGWLMASEMIAMDIDISFAPVLDVGHISAAIGERSYHADPQKALAIASRFIDGMHEAGMKTTGKHFPGHGAVTADSHKETPCDPRPQAEIRAKDMSVFSSLIRENKLDAIMPAHVIYSDVDPRPASGSPYWLKTVLRQELGFDGVIFSDDLSMEGAAIMGSYAERGQASLDAGCDMILVCNNRKGAVSVLDNLSPIKAERVTRLYHKGSFSRQELMDSARWKAISARLNQLHERWQEEKAGH</sequence>
<protein>
    <recommendedName>
        <fullName evidence="1">Beta-hexosaminidase</fullName>
        <ecNumber evidence="1">3.2.1.52</ecNumber>
    </recommendedName>
    <alternativeName>
        <fullName evidence="1">Beta-N-acetylhexosaminidase</fullName>
    </alternativeName>
    <alternativeName>
        <fullName evidence="1">N-acetyl-beta-glucosaminidase</fullName>
    </alternativeName>
</protein>
<reference key="1">
    <citation type="journal article" date="2009" name="J. Bacteriol.">
        <title>Complete genome sequence and comparative genome analysis of enteropathogenic Escherichia coli O127:H6 strain E2348/69.</title>
        <authorList>
            <person name="Iguchi A."/>
            <person name="Thomson N.R."/>
            <person name="Ogura Y."/>
            <person name="Saunders D."/>
            <person name="Ooka T."/>
            <person name="Henderson I.R."/>
            <person name="Harris D."/>
            <person name="Asadulghani M."/>
            <person name="Kurokawa K."/>
            <person name="Dean P."/>
            <person name="Kenny B."/>
            <person name="Quail M.A."/>
            <person name="Thurston S."/>
            <person name="Dougan G."/>
            <person name="Hayashi T."/>
            <person name="Parkhill J."/>
            <person name="Frankel G."/>
        </authorList>
    </citation>
    <scope>NUCLEOTIDE SEQUENCE [LARGE SCALE GENOMIC DNA]</scope>
    <source>
        <strain>E2348/69 / EPEC</strain>
    </source>
</reference>
<evidence type="ECO:0000255" key="1">
    <source>
        <dbReference type="HAMAP-Rule" id="MF_00364"/>
    </source>
</evidence>
<organism>
    <name type="scientific">Escherichia coli O127:H6 (strain E2348/69 / EPEC)</name>
    <dbReference type="NCBI Taxonomy" id="574521"/>
    <lineage>
        <taxon>Bacteria</taxon>
        <taxon>Pseudomonadati</taxon>
        <taxon>Pseudomonadota</taxon>
        <taxon>Gammaproteobacteria</taxon>
        <taxon>Enterobacterales</taxon>
        <taxon>Enterobacteriaceae</taxon>
        <taxon>Escherichia</taxon>
    </lineage>
</organism>